<protein>
    <recommendedName>
        <fullName evidence="1">Large ribosomal subunit protein uL22</fullName>
    </recommendedName>
    <alternativeName>
        <fullName evidence="2">50S ribosomal protein L22</fullName>
    </alternativeName>
</protein>
<gene>
    <name evidence="1" type="primary">rplV</name>
    <name type="ordered locus">Mmar10_1790</name>
</gene>
<sequence>MGQSTNPRRVADNEARAKLRMIRTSPQKLNLVAALIRGKKVERALADLEFSRKRISKEVKKTLESAIANAENNHGLDIDSLVVSEAFVGKNLVMKRFRARARGRGAKILKPFSELTIVVREVEEAA</sequence>
<feature type="chain" id="PRO_1000052602" description="Large ribosomal subunit protein uL22">
    <location>
        <begin position="1"/>
        <end position="126"/>
    </location>
</feature>
<organism>
    <name type="scientific">Maricaulis maris (strain MCS10)</name>
    <name type="common">Caulobacter maris</name>
    <dbReference type="NCBI Taxonomy" id="394221"/>
    <lineage>
        <taxon>Bacteria</taxon>
        <taxon>Pseudomonadati</taxon>
        <taxon>Pseudomonadota</taxon>
        <taxon>Alphaproteobacteria</taxon>
        <taxon>Maricaulales</taxon>
        <taxon>Maricaulaceae</taxon>
        <taxon>Maricaulis</taxon>
    </lineage>
</organism>
<dbReference type="EMBL" id="CP000449">
    <property type="protein sequence ID" value="ABI66082.1"/>
    <property type="molecule type" value="Genomic_DNA"/>
</dbReference>
<dbReference type="RefSeq" id="WP_011643728.1">
    <property type="nucleotide sequence ID" value="NC_008347.1"/>
</dbReference>
<dbReference type="SMR" id="Q0ANQ5"/>
<dbReference type="STRING" id="394221.Mmar10_1790"/>
<dbReference type="KEGG" id="mmr:Mmar10_1790"/>
<dbReference type="eggNOG" id="COG0091">
    <property type="taxonomic scope" value="Bacteria"/>
</dbReference>
<dbReference type="HOGENOM" id="CLU_083987_3_0_5"/>
<dbReference type="OrthoDB" id="9805969at2"/>
<dbReference type="Proteomes" id="UP000001964">
    <property type="component" value="Chromosome"/>
</dbReference>
<dbReference type="GO" id="GO:0022625">
    <property type="term" value="C:cytosolic large ribosomal subunit"/>
    <property type="evidence" value="ECO:0007669"/>
    <property type="project" value="TreeGrafter"/>
</dbReference>
<dbReference type="GO" id="GO:0019843">
    <property type="term" value="F:rRNA binding"/>
    <property type="evidence" value="ECO:0007669"/>
    <property type="project" value="UniProtKB-UniRule"/>
</dbReference>
<dbReference type="GO" id="GO:0003735">
    <property type="term" value="F:structural constituent of ribosome"/>
    <property type="evidence" value="ECO:0007669"/>
    <property type="project" value="InterPro"/>
</dbReference>
<dbReference type="GO" id="GO:0006412">
    <property type="term" value="P:translation"/>
    <property type="evidence" value="ECO:0007669"/>
    <property type="project" value="UniProtKB-UniRule"/>
</dbReference>
<dbReference type="CDD" id="cd00336">
    <property type="entry name" value="Ribosomal_L22"/>
    <property type="match status" value="1"/>
</dbReference>
<dbReference type="Gene3D" id="3.90.470.10">
    <property type="entry name" value="Ribosomal protein L22/L17"/>
    <property type="match status" value="1"/>
</dbReference>
<dbReference type="HAMAP" id="MF_01331_B">
    <property type="entry name" value="Ribosomal_uL22_B"/>
    <property type="match status" value="1"/>
</dbReference>
<dbReference type="InterPro" id="IPR001063">
    <property type="entry name" value="Ribosomal_uL22"/>
</dbReference>
<dbReference type="InterPro" id="IPR005727">
    <property type="entry name" value="Ribosomal_uL22_bac/chlpt-type"/>
</dbReference>
<dbReference type="InterPro" id="IPR047867">
    <property type="entry name" value="Ribosomal_uL22_bac/org-type"/>
</dbReference>
<dbReference type="InterPro" id="IPR036394">
    <property type="entry name" value="Ribosomal_uL22_sf"/>
</dbReference>
<dbReference type="NCBIfam" id="TIGR01044">
    <property type="entry name" value="rplV_bact"/>
    <property type="match status" value="1"/>
</dbReference>
<dbReference type="PANTHER" id="PTHR13501">
    <property type="entry name" value="CHLOROPLAST 50S RIBOSOMAL PROTEIN L22-RELATED"/>
    <property type="match status" value="1"/>
</dbReference>
<dbReference type="PANTHER" id="PTHR13501:SF8">
    <property type="entry name" value="LARGE RIBOSOMAL SUBUNIT PROTEIN UL22M"/>
    <property type="match status" value="1"/>
</dbReference>
<dbReference type="Pfam" id="PF00237">
    <property type="entry name" value="Ribosomal_L22"/>
    <property type="match status" value="1"/>
</dbReference>
<dbReference type="SUPFAM" id="SSF54843">
    <property type="entry name" value="Ribosomal protein L22"/>
    <property type="match status" value="1"/>
</dbReference>
<keyword id="KW-1185">Reference proteome</keyword>
<keyword id="KW-0687">Ribonucleoprotein</keyword>
<keyword id="KW-0689">Ribosomal protein</keyword>
<keyword id="KW-0694">RNA-binding</keyword>
<keyword id="KW-0699">rRNA-binding</keyword>
<comment type="function">
    <text evidence="1">This protein binds specifically to 23S rRNA; its binding is stimulated by other ribosomal proteins, e.g. L4, L17, and L20. It is important during the early stages of 50S assembly. It makes multiple contacts with different domains of the 23S rRNA in the assembled 50S subunit and ribosome (By similarity).</text>
</comment>
<comment type="function">
    <text evidence="1">The globular domain of the protein is located near the polypeptide exit tunnel on the outside of the subunit, while an extended beta-hairpin is found that lines the wall of the exit tunnel in the center of the 70S ribosome.</text>
</comment>
<comment type="subunit">
    <text evidence="1">Part of the 50S ribosomal subunit.</text>
</comment>
<comment type="similarity">
    <text evidence="1">Belongs to the universal ribosomal protein uL22 family.</text>
</comment>
<reference key="1">
    <citation type="submission" date="2006-08" db="EMBL/GenBank/DDBJ databases">
        <title>Complete sequence of Maricaulis maris MCS10.</title>
        <authorList>
            <consortium name="US DOE Joint Genome Institute"/>
            <person name="Copeland A."/>
            <person name="Lucas S."/>
            <person name="Lapidus A."/>
            <person name="Barry K."/>
            <person name="Detter J.C."/>
            <person name="Glavina del Rio T."/>
            <person name="Hammon N."/>
            <person name="Israni S."/>
            <person name="Dalin E."/>
            <person name="Tice H."/>
            <person name="Pitluck S."/>
            <person name="Saunders E."/>
            <person name="Brettin T."/>
            <person name="Bruce D."/>
            <person name="Han C."/>
            <person name="Tapia R."/>
            <person name="Gilna P."/>
            <person name="Schmutz J."/>
            <person name="Larimer F."/>
            <person name="Land M."/>
            <person name="Hauser L."/>
            <person name="Kyrpides N."/>
            <person name="Mikhailova N."/>
            <person name="Viollier P."/>
            <person name="Stephens C."/>
            <person name="Richardson P."/>
        </authorList>
    </citation>
    <scope>NUCLEOTIDE SEQUENCE [LARGE SCALE GENOMIC DNA]</scope>
    <source>
        <strain>MCS10</strain>
    </source>
</reference>
<name>RL22_MARMM</name>
<proteinExistence type="inferred from homology"/>
<accession>Q0ANQ5</accession>
<evidence type="ECO:0000255" key="1">
    <source>
        <dbReference type="HAMAP-Rule" id="MF_01331"/>
    </source>
</evidence>
<evidence type="ECO:0000305" key="2"/>